<name>REX_STRAW</name>
<dbReference type="EMBL" id="BA000030">
    <property type="protein sequence ID" value="BAC72450.1"/>
    <property type="molecule type" value="Genomic_DNA"/>
</dbReference>
<dbReference type="RefSeq" id="WP_010986161.1">
    <property type="nucleotide sequence ID" value="NZ_JZJK01000077.1"/>
</dbReference>
<dbReference type="SMR" id="Q82E78"/>
<dbReference type="GeneID" id="41541822"/>
<dbReference type="KEGG" id="sma:SAVERM_4738"/>
<dbReference type="eggNOG" id="COG2344">
    <property type="taxonomic scope" value="Bacteria"/>
</dbReference>
<dbReference type="HOGENOM" id="CLU_061534_0_1_11"/>
<dbReference type="OrthoDB" id="9784760at2"/>
<dbReference type="Proteomes" id="UP000000428">
    <property type="component" value="Chromosome"/>
</dbReference>
<dbReference type="GO" id="GO:0005737">
    <property type="term" value="C:cytoplasm"/>
    <property type="evidence" value="ECO:0007669"/>
    <property type="project" value="UniProtKB-SubCell"/>
</dbReference>
<dbReference type="GO" id="GO:0003677">
    <property type="term" value="F:DNA binding"/>
    <property type="evidence" value="ECO:0007669"/>
    <property type="project" value="UniProtKB-UniRule"/>
</dbReference>
<dbReference type="GO" id="GO:0003700">
    <property type="term" value="F:DNA-binding transcription factor activity"/>
    <property type="evidence" value="ECO:0007669"/>
    <property type="project" value="UniProtKB-UniRule"/>
</dbReference>
<dbReference type="GO" id="GO:0045892">
    <property type="term" value="P:negative regulation of DNA-templated transcription"/>
    <property type="evidence" value="ECO:0007669"/>
    <property type="project" value="InterPro"/>
</dbReference>
<dbReference type="GO" id="GO:0051775">
    <property type="term" value="P:response to redox state"/>
    <property type="evidence" value="ECO:0007669"/>
    <property type="project" value="InterPro"/>
</dbReference>
<dbReference type="FunFam" id="1.10.10.10:FF:000124">
    <property type="entry name" value="Redox-sensing transcriptional repressor Rex"/>
    <property type="match status" value="1"/>
</dbReference>
<dbReference type="FunFam" id="3.40.50.720:FF:000303">
    <property type="entry name" value="Redox-sensing transcriptional repressor Rex"/>
    <property type="match status" value="1"/>
</dbReference>
<dbReference type="Gene3D" id="3.40.50.720">
    <property type="entry name" value="NAD(P)-binding Rossmann-like Domain"/>
    <property type="match status" value="1"/>
</dbReference>
<dbReference type="Gene3D" id="1.10.10.10">
    <property type="entry name" value="Winged helix-like DNA-binding domain superfamily/Winged helix DNA-binding domain"/>
    <property type="match status" value="1"/>
</dbReference>
<dbReference type="HAMAP" id="MF_01131">
    <property type="entry name" value="Rex"/>
    <property type="match status" value="1"/>
</dbReference>
<dbReference type="InterPro" id="IPR003781">
    <property type="entry name" value="CoA-bd"/>
</dbReference>
<dbReference type="InterPro" id="IPR036291">
    <property type="entry name" value="NAD(P)-bd_dom_sf"/>
</dbReference>
<dbReference type="InterPro" id="IPR009718">
    <property type="entry name" value="Rex_DNA-bd_C_dom"/>
</dbReference>
<dbReference type="InterPro" id="IPR022876">
    <property type="entry name" value="Tscrpt_rep_Rex"/>
</dbReference>
<dbReference type="InterPro" id="IPR036388">
    <property type="entry name" value="WH-like_DNA-bd_sf"/>
</dbReference>
<dbReference type="InterPro" id="IPR036390">
    <property type="entry name" value="WH_DNA-bd_sf"/>
</dbReference>
<dbReference type="NCBIfam" id="NF003989">
    <property type="entry name" value="PRK05472.1-3"/>
    <property type="match status" value="1"/>
</dbReference>
<dbReference type="NCBIfam" id="NF003992">
    <property type="entry name" value="PRK05472.2-1"/>
    <property type="match status" value="1"/>
</dbReference>
<dbReference type="NCBIfam" id="NF003993">
    <property type="entry name" value="PRK05472.2-2"/>
    <property type="match status" value="1"/>
</dbReference>
<dbReference type="NCBIfam" id="NF003994">
    <property type="entry name" value="PRK05472.2-3"/>
    <property type="match status" value="1"/>
</dbReference>
<dbReference type="NCBIfam" id="NF003995">
    <property type="entry name" value="PRK05472.2-4"/>
    <property type="match status" value="1"/>
</dbReference>
<dbReference type="NCBIfam" id="NF003996">
    <property type="entry name" value="PRK05472.2-5"/>
    <property type="match status" value="1"/>
</dbReference>
<dbReference type="PANTHER" id="PTHR35786">
    <property type="entry name" value="REDOX-SENSING TRANSCRIPTIONAL REPRESSOR REX"/>
    <property type="match status" value="1"/>
</dbReference>
<dbReference type="PANTHER" id="PTHR35786:SF1">
    <property type="entry name" value="REDOX-SENSING TRANSCRIPTIONAL REPRESSOR REX 1"/>
    <property type="match status" value="1"/>
</dbReference>
<dbReference type="Pfam" id="PF02629">
    <property type="entry name" value="CoA_binding"/>
    <property type="match status" value="1"/>
</dbReference>
<dbReference type="Pfam" id="PF06971">
    <property type="entry name" value="Put_DNA-bind_N"/>
    <property type="match status" value="1"/>
</dbReference>
<dbReference type="SMART" id="SM00881">
    <property type="entry name" value="CoA_binding"/>
    <property type="match status" value="1"/>
</dbReference>
<dbReference type="SUPFAM" id="SSF51735">
    <property type="entry name" value="NAD(P)-binding Rossmann-fold domains"/>
    <property type="match status" value="1"/>
</dbReference>
<dbReference type="SUPFAM" id="SSF46785">
    <property type="entry name" value="Winged helix' DNA-binding domain"/>
    <property type="match status" value="1"/>
</dbReference>
<keyword id="KW-0963">Cytoplasm</keyword>
<keyword id="KW-0238">DNA-binding</keyword>
<keyword id="KW-0520">NAD</keyword>
<keyword id="KW-1185">Reference proteome</keyword>
<keyword id="KW-0678">Repressor</keyword>
<keyword id="KW-0804">Transcription</keyword>
<keyword id="KW-0805">Transcription regulation</keyword>
<accession>Q82E78</accession>
<organism>
    <name type="scientific">Streptomyces avermitilis (strain ATCC 31267 / DSM 46492 / JCM 5070 / NBRC 14893 / NCIMB 12804 / NRRL 8165 / MA-4680)</name>
    <dbReference type="NCBI Taxonomy" id="227882"/>
    <lineage>
        <taxon>Bacteria</taxon>
        <taxon>Bacillati</taxon>
        <taxon>Actinomycetota</taxon>
        <taxon>Actinomycetes</taxon>
        <taxon>Kitasatosporales</taxon>
        <taxon>Streptomycetaceae</taxon>
        <taxon>Streptomyces</taxon>
    </lineage>
</organism>
<evidence type="ECO:0000255" key="1">
    <source>
        <dbReference type="HAMAP-Rule" id="MF_01131"/>
    </source>
</evidence>
<evidence type="ECO:0000256" key="2">
    <source>
        <dbReference type="SAM" id="MobiDB-lite"/>
    </source>
</evidence>
<gene>
    <name evidence="1" type="primary">rex</name>
    <name type="ordered locus">SAV_4738</name>
</gene>
<feature type="chain" id="PRO_0000097915" description="Redox-sensing transcriptional repressor Rex">
    <location>
        <begin position="1"/>
        <end position="252"/>
    </location>
</feature>
<feature type="DNA-binding region" description="H-T-H motif" evidence="1">
    <location>
        <begin position="26"/>
        <end position="65"/>
    </location>
</feature>
<feature type="region of interest" description="Disordered" evidence="2">
    <location>
        <begin position="222"/>
        <end position="252"/>
    </location>
</feature>
<feature type="binding site" evidence="1">
    <location>
        <begin position="100"/>
        <end position="105"/>
    </location>
    <ligand>
        <name>NAD(+)</name>
        <dbReference type="ChEBI" id="CHEBI:57540"/>
    </ligand>
</feature>
<proteinExistence type="inferred from homology"/>
<protein>
    <recommendedName>
        <fullName evidence="1">Redox-sensing transcriptional repressor Rex</fullName>
    </recommendedName>
</protein>
<sequence length="252" mass="26088">MATGRTHRPATRSRGIPEATVARLPLYLRALTALSERSVPTVSSEELAAAAGVNSAKLRKDFSYLGSYGTRGVGYDVEYLVYQISRELGLTQDWPVVIVGIGNLGAALANYGGFASRGFRVAALIDADPAMAGKPVAGIPVQHTDELEKIIDGNGVSIGVIATPAGAAQQVCDRLVAAGVTSILNFAPTVLTVPDGVDVRKVDLSIELQILAFHEQRKAGEEAAAEGAIPAAASKESADKGPDGDVPAVMPA</sequence>
<comment type="function">
    <text evidence="1">Modulates transcription in response to changes in cellular NADH/NAD(+) redox state.</text>
</comment>
<comment type="subunit">
    <text evidence="1">Homodimer.</text>
</comment>
<comment type="subcellular location">
    <subcellularLocation>
        <location evidence="1">Cytoplasm</location>
    </subcellularLocation>
</comment>
<comment type="similarity">
    <text evidence="1">Belongs to the transcriptional regulatory Rex family.</text>
</comment>
<reference key="1">
    <citation type="journal article" date="2001" name="Proc. Natl. Acad. Sci. U.S.A.">
        <title>Genome sequence of an industrial microorganism Streptomyces avermitilis: deducing the ability of producing secondary metabolites.</title>
        <authorList>
            <person name="Omura S."/>
            <person name="Ikeda H."/>
            <person name="Ishikawa J."/>
            <person name="Hanamoto A."/>
            <person name="Takahashi C."/>
            <person name="Shinose M."/>
            <person name="Takahashi Y."/>
            <person name="Horikawa H."/>
            <person name="Nakazawa H."/>
            <person name="Osonoe T."/>
            <person name="Kikuchi H."/>
            <person name="Shiba T."/>
            <person name="Sakaki Y."/>
            <person name="Hattori M."/>
        </authorList>
    </citation>
    <scope>NUCLEOTIDE SEQUENCE [LARGE SCALE GENOMIC DNA]</scope>
    <source>
        <strain>ATCC 31267 / DSM 46492 / JCM 5070 / NBRC 14893 / NCIMB 12804 / NRRL 8165 / MA-4680</strain>
    </source>
</reference>
<reference key="2">
    <citation type="journal article" date="2003" name="Nat. Biotechnol.">
        <title>Complete genome sequence and comparative analysis of the industrial microorganism Streptomyces avermitilis.</title>
        <authorList>
            <person name="Ikeda H."/>
            <person name="Ishikawa J."/>
            <person name="Hanamoto A."/>
            <person name="Shinose M."/>
            <person name="Kikuchi H."/>
            <person name="Shiba T."/>
            <person name="Sakaki Y."/>
            <person name="Hattori M."/>
            <person name="Omura S."/>
        </authorList>
    </citation>
    <scope>NUCLEOTIDE SEQUENCE [LARGE SCALE GENOMIC DNA]</scope>
    <source>
        <strain>ATCC 31267 / DSM 46492 / JCM 5070 / NBRC 14893 / NCIMB 12804 / NRRL 8165 / MA-4680</strain>
    </source>
</reference>